<name>PYRF_COCPS</name>
<protein>
    <recommendedName>
        <fullName>Orotidine 5'-phosphate decarboxylase</fullName>
        <ecNumber>4.1.1.23</ecNumber>
    </recommendedName>
    <alternativeName>
        <fullName>OMP decarboxylase</fullName>
        <shortName>OMPDCase</shortName>
        <shortName>OMPdecase</shortName>
    </alternativeName>
    <alternativeName>
        <fullName>Uridine 5'-monophosphate synthase</fullName>
        <shortName>UMP synthase</shortName>
    </alternativeName>
</protein>
<proteinExistence type="inferred from homology"/>
<reference key="1">
    <citation type="submission" date="2003-04" db="EMBL/GenBank/DDBJ databases">
        <title>Isolation and confirmation of function of the Coccidioides posadasii URA3 (orotidine-5'-monophosphate decarboxylase) gene.</title>
        <authorList>
            <person name="Chen X."/>
            <person name="Hung C.-Y."/>
            <person name="Cole G.T."/>
        </authorList>
    </citation>
    <scope>NUCLEOTIDE SEQUENCE [GENOMIC DNA]</scope>
</reference>
<reference key="2">
    <citation type="submission" date="2010-03" db="EMBL/GenBank/DDBJ databases">
        <title>The genome sequence of Coccidioides posadasii strain Silveira.</title>
        <authorList>
            <consortium name="The Broad Institute Genome Sequencing Center for Infectious Disease"/>
            <person name="Neafsey D."/>
            <person name="Orbach M."/>
            <person name="Henn M.R."/>
            <person name="Cole G.T."/>
            <person name="Galgiani J."/>
            <person name="Gardner M.J."/>
            <person name="Kirkland T.N."/>
            <person name="Taylor J.W."/>
            <person name="Young S.K."/>
            <person name="Zeng Q."/>
            <person name="Koehrsen M."/>
            <person name="Alvarado L."/>
            <person name="Berlin A."/>
            <person name="Borenstein D."/>
            <person name="Chapman S.B."/>
            <person name="Chen Z."/>
            <person name="Engels R."/>
            <person name="Freedman E."/>
            <person name="Gellesch M."/>
            <person name="Goldberg J."/>
            <person name="Griggs A."/>
            <person name="Gujja S."/>
            <person name="Heilman E."/>
            <person name="Heiman D."/>
            <person name="Howarth C."/>
            <person name="Jen D."/>
            <person name="Larson L."/>
            <person name="Mehta T."/>
            <person name="Neiman D."/>
            <person name="Park D."/>
            <person name="Pearson M."/>
            <person name="Richards J."/>
            <person name="Roberts A."/>
            <person name="Saif S."/>
            <person name="Shea T."/>
            <person name="Shenoy N."/>
            <person name="Sisk P."/>
            <person name="Stolte C."/>
            <person name="Sykes S."/>
            <person name="Walk T."/>
            <person name="White J."/>
            <person name="Yandava C."/>
            <person name="Haas B."/>
            <person name="Nusbaum C."/>
            <person name="Birren B."/>
        </authorList>
    </citation>
    <scope>NUCLEOTIDE SEQUENCE [LARGE SCALE GENOMIC DNA]</scope>
    <source>
        <strain>RMSCC 757 / Silveira</strain>
    </source>
</reference>
<reference key="3">
    <citation type="journal article" date="1997" name="Proc. Natl. Acad. Sci. U.S.A.">
        <title>Concordance of gene genealogies reveals reproductive isolation in the pathogenic fungus Coccidioides immitis.</title>
        <authorList>
            <person name="Koufopanou V."/>
            <person name="Burt A."/>
            <person name="Taylor J.W."/>
        </authorList>
    </citation>
    <scope>NUCLEOTIDE SEQUENCE [GENOMIC DNA] OF 70-201</scope>
    <source>
        <strain>RMSCC 2233 / TX2</strain>
        <strain>RMSCC 2343 / MX1</strain>
        <strain>RMSCC 757 / Silveira</strain>
    </source>
</reference>
<reference key="4">
    <citation type="journal article" date="1998" name="Proc. Natl. Acad. Sci. U.S.A.">
        <authorList>
            <person name="Koufopanou V."/>
            <person name="Burt A."/>
            <person name="Taylor J.W."/>
        </authorList>
    </citation>
    <scope>ERRATUM OF PUBMED:9144263</scope>
</reference>
<keyword id="KW-0210">Decarboxylase</keyword>
<keyword id="KW-0456">Lyase</keyword>
<keyword id="KW-0665">Pyrimidine biosynthesis</keyword>
<keyword id="KW-1185">Reference proteome</keyword>
<comment type="catalytic activity">
    <reaction evidence="2">
        <text>orotidine 5'-phosphate + H(+) = UMP + CO2</text>
        <dbReference type="Rhea" id="RHEA:11596"/>
        <dbReference type="ChEBI" id="CHEBI:15378"/>
        <dbReference type="ChEBI" id="CHEBI:16526"/>
        <dbReference type="ChEBI" id="CHEBI:57538"/>
        <dbReference type="ChEBI" id="CHEBI:57865"/>
        <dbReference type="EC" id="4.1.1.23"/>
    </reaction>
</comment>
<comment type="pathway">
    <text>Pyrimidine metabolism; UMP biosynthesis via de novo pathway; UMP from orotate: step 2/2.</text>
</comment>
<comment type="similarity">
    <text evidence="3">Belongs to the OMP decarboxylase family.</text>
</comment>
<gene>
    <name type="primary">URA3</name>
    <name type="ORF">CPSG_08082</name>
</gene>
<organism>
    <name type="scientific">Coccidioides posadasii (strain RMSCC 757 / Silveira)</name>
    <name type="common">Valley fever fungus</name>
    <dbReference type="NCBI Taxonomy" id="443226"/>
    <lineage>
        <taxon>Eukaryota</taxon>
        <taxon>Fungi</taxon>
        <taxon>Dikarya</taxon>
        <taxon>Ascomycota</taxon>
        <taxon>Pezizomycotina</taxon>
        <taxon>Eurotiomycetes</taxon>
        <taxon>Eurotiomycetidae</taxon>
        <taxon>Onygenales</taxon>
        <taxon>Onygenaceae</taxon>
        <taxon>Coccidioides</taxon>
    </lineage>
</organism>
<accession>Q4VWW3</accession>
<accession>E9DDC0</accession>
<accession>Q9C0T0</accession>
<evidence type="ECO:0000250" key="1"/>
<evidence type="ECO:0000255" key="2">
    <source>
        <dbReference type="PROSITE-ProRule" id="PRU10110"/>
    </source>
</evidence>
<evidence type="ECO:0000305" key="3"/>
<dbReference type="EC" id="4.1.1.23"/>
<dbReference type="EMBL" id="AY282521">
    <property type="protein sequence ID" value="AAQ16206.1"/>
    <property type="molecule type" value="Genomic_DNA"/>
</dbReference>
<dbReference type="EMBL" id="GL636500">
    <property type="protein sequence ID" value="EFW15645.1"/>
    <property type="molecule type" value="Genomic_DNA"/>
</dbReference>
<dbReference type="EMBL" id="AJ292100">
    <property type="protein sequence ID" value="CAC35044.1"/>
    <property type="molecule type" value="Genomic_DNA"/>
</dbReference>
<dbReference type="EMBL" id="AJ292101">
    <property type="protein sequence ID" value="CAC35045.1"/>
    <property type="molecule type" value="Genomic_DNA"/>
</dbReference>
<dbReference type="EMBL" id="AJ292102">
    <property type="protein sequence ID" value="CAC35046.1"/>
    <property type="molecule type" value="Genomic_DNA"/>
</dbReference>
<dbReference type="RefSeq" id="XP_003066228.1">
    <property type="nucleotide sequence ID" value="XM_003066182.2"/>
</dbReference>
<dbReference type="SMR" id="Q4VWW3"/>
<dbReference type="STRING" id="443226.Q4VWW3"/>
<dbReference type="GeneID" id="9691698"/>
<dbReference type="VEuPathDB" id="FungiDB:CPSG_08082"/>
<dbReference type="VEuPathDB" id="FungiDB:D8B26_002262"/>
<dbReference type="eggNOG" id="KOG1377">
    <property type="taxonomic scope" value="Eukaryota"/>
</dbReference>
<dbReference type="HOGENOM" id="CLU_030821_0_0_1"/>
<dbReference type="OMA" id="CLIKTHI"/>
<dbReference type="OrthoDB" id="16518at33183"/>
<dbReference type="UniPathway" id="UPA00070">
    <property type="reaction ID" value="UER00120"/>
</dbReference>
<dbReference type="Proteomes" id="UP000002497">
    <property type="component" value="Unassembled WGS sequence"/>
</dbReference>
<dbReference type="GO" id="GO:0005829">
    <property type="term" value="C:cytosol"/>
    <property type="evidence" value="ECO:0007669"/>
    <property type="project" value="EnsemblFungi"/>
</dbReference>
<dbReference type="GO" id="GO:0004590">
    <property type="term" value="F:orotidine-5'-phosphate decarboxylase activity"/>
    <property type="evidence" value="ECO:0007669"/>
    <property type="project" value="UniProtKB-EC"/>
</dbReference>
<dbReference type="GO" id="GO:0006207">
    <property type="term" value="P:'de novo' pyrimidine nucleobase biosynthetic process"/>
    <property type="evidence" value="ECO:0007669"/>
    <property type="project" value="EnsemblFungi"/>
</dbReference>
<dbReference type="GO" id="GO:0044205">
    <property type="term" value="P:'de novo' UMP biosynthetic process"/>
    <property type="evidence" value="ECO:0007669"/>
    <property type="project" value="UniProtKB-UniPathway"/>
</dbReference>
<dbReference type="CDD" id="cd04725">
    <property type="entry name" value="OMP_decarboxylase_like"/>
    <property type="match status" value="1"/>
</dbReference>
<dbReference type="FunFam" id="3.20.20.70:FF:000114">
    <property type="entry name" value="Decarboxylase,orotidine phosphate"/>
    <property type="match status" value="1"/>
</dbReference>
<dbReference type="Gene3D" id="3.20.20.70">
    <property type="entry name" value="Aldolase class I"/>
    <property type="match status" value="1"/>
</dbReference>
<dbReference type="InterPro" id="IPR013785">
    <property type="entry name" value="Aldolase_TIM"/>
</dbReference>
<dbReference type="InterPro" id="IPR014732">
    <property type="entry name" value="OMPdecase"/>
</dbReference>
<dbReference type="InterPro" id="IPR018089">
    <property type="entry name" value="OMPdecase_AS"/>
</dbReference>
<dbReference type="InterPro" id="IPR001754">
    <property type="entry name" value="OMPdeCOase_dom"/>
</dbReference>
<dbReference type="InterPro" id="IPR011060">
    <property type="entry name" value="RibuloseP-bd_barrel"/>
</dbReference>
<dbReference type="NCBIfam" id="TIGR01740">
    <property type="entry name" value="pyrF"/>
    <property type="match status" value="1"/>
</dbReference>
<dbReference type="PANTHER" id="PTHR32119">
    <property type="entry name" value="OROTIDINE 5'-PHOSPHATE DECARBOXYLASE"/>
    <property type="match status" value="1"/>
</dbReference>
<dbReference type="PANTHER" id="PTHR32119:SF2">
    <property type="entry name" value="OROTIDINE 5'-PHOSPHATE DECARBOXYLASE"/>
    <property type="match status" value="1"/>
</dbReference>
<dbReference type="Pfam" id="PF00215">
    <property type="entry name" value="OMPdecase"/>
    <property type="match status" value="1"/>
</dbReference>
<dbReference type="SMART" id="SM00934">
    <property type="entry name" value="OMPdecase"/>
    <property type="match status" value="1"/>
</dbReference>
<dbReference type="SUPFAM" id="SSF51366">
    <property type="entry name" value="Ribulose-phoshate binding barrel"/>
    <property type="match status" value="1"/>
</dbReference>
<dbReference type="PROSITE" id="PS00156">
    <property type="entry name" value="OMPDECASE"/>
    <property type="match status" value="1"/>
</dbReference>
<sequence>MASKSQFPYEDRARDHPNPLARRLFQIATEKQSNVVVSADVTTTKELLDLADRLGPYMVVLKTHIDILADFSAETITGLQSLSQKHNFLIFEDRKFVDIGNTVQKQYHGGALHISEWAHIVNATVLPGPGIIDALAQVASAPDFPHASDRGLLILATMTSKGSLATGQYTELSVELARKYKGFVLGFVASRSLEGVETAGKADDEDFVLFTTGVNLASKGDALGQQYQTPESAIGGGADFIISGRGIYAAPDPVDAARRYQKAGWDAYLKRVGR</sequence>
<feature type="chain" id="PRO_0000134657" description="Orotidine 5'-phosphate decarboxylase">
    <location>
        <begin position="1"/>
        <end position="274"/>
    </location>
</feature>
<feature type="active site" description="Proton donor" evidence="2">
    <location>
        <position position="95"/>
    </location>
</feature>
<feature type="binding site" evidence="1">
    <location>
        <position position="40"/>
    </location>
    <ligand>
        <name>substrate</name>
    </ligand>
</feature>
<feature type="binding site" evidence="1">
    <location>
        <begin position="62"/>
        <end position="64"/>
    </location>
    <ligand>
        <name>substrate</name>
    </ligand>
</feature>
<feature type="binding site" evidence="1">
    <location>
        <begin position="93"/>
        <end position="102"/>
    </location>
    <ligand>
        <name>substrate</name>
    </ligand>
</feature>
<feature type="binding site" evidence="1">
    <location>
        <position position="227"/>
    </location>
    <ligand>
        <name>substrate</name>
    </ligand>
</feature>
<feature type="binding site" evidence="1">
    <location>
        <position position="245"/>
    </location>
    <ligand>
        <name>substrate</name>
    </ligand>
</feature>